<comment type="function">
    <text evidence="1">Located on the platform of the 30S subunit, it bridges several disparate RNA helices of the 16S rRNA. Forms part of the Shine-Dalgarno cleft in the 70S ribosome.</text>
</comment>
<comment type="subunit">
    <text evidence="1">Part of the 30S ribosomal subunit. Interacts with proteins S7 and S18. Binds to IF-3.</text>
</comment>
<comment type="similarity">
    <text evidence="1">Belongs to the universal ribosomal protein uS11 family.</text>
</comment>
<dbReference type="EMBL" id="CP000526">
    <property type="protein sequence ID" value="ABM51592.1"/>
    <property type="molecule type" value="Genomic_DNA"/>
</dbReference>
<dbReference type="RefSeq" id="WP_004197937.1">
    <property type="nucleotide sequence ID" value="NC_008785.1"/>
</dbReference>
<dbReference type="SMR" id="A1V879"/>
<dbReference type="GeneID" id="98107136"/>
<dbReference type="KEGG" id="bmv:BMASAVP1_A3145"/>
<dbReference type="HOGENOM" id="CLU_072439_5_0_4"/>
<dbReference type="GO" id="GO:1990904">
    <property type="term" value="C:ribonucleoprotein complex"/>
    <property type="evidence" value="ECO:0007669"/>
    <property type="project" value="UniProtKB-KW"/>
</dbReference>
<dbReference type="GO" id="GO:0005840">
    <property type="term" value="C:ribosome"/>
    <property type="evidence" value="ECO:0007669"/>
    <property type="project" value="UniProtKB-KW"/>
</dbReference>
<dbReference type="GO" id="GO:0019843">
    <property type="term" value="F:rRNA binding"/>
    <property type="evidence" value="ECO:0007669"/>
    <property type="project" value="UniProtKB-UniRule"/>
</dbReference>
<dbReference type="GO" id="GO:0003735">
    <property type="term" value="F:structural constituent of ribosome"/>
    <property type="evidence" value="ECO:0007669"/>
    <property type="project" value="InterPro"/>
</dbReference>
<dbReference type="GO" id="GO:0006412">
    <property type="term" value="P:translation"/>
    <property type="evidence" value="ECO:0007669"/>
    <property type="project" value="UniProtKB-UniRule"/>
</dbReference>
<dbReference type="FunFam" id="3.30.420.80:FF:000001">
    <property type="entry name" value="30S ribosomal protein S11"/>
    <property type="match status" value="1"/>
</dbReference>
<dbReference type="Gene3D" id="3.30.420.80">
    <property type="entry name" value="Ribosomal protein S11"/>
    <property type="match status" value="1"/>
</dbReference>
<dbReference type="HAMAP" id="MF_01310">
    <property type="entry name" value="Ribosomal_uS11"/>
    <property type="match status" value="1"/>
</dbReference>
<dbReference type="InterPro" id="IPR001971">
    <property type="entry name" value="Ribosomal_uS11"/>
</dbReference>
<dbReference type="InterPro" id="IPR019981">
    <property type="entry name" value="Ribosomal_uS11_bac-type"/>
</dbReference>
<dbReference type="InterPro" id="IPR018102">
    <property type="entry name" value="Ribosomal_uS11_CS"/>
</dbReference>
<dbReference type="InterPro" id="IPR036967">
    <property type="entry name" value="Ribosomal_uS11_sf"/>
</dbReference>
<dbReference type="NCBIfam" id="NF003698">
    <property type="entry name" value="PRK05309.1"/>
    <property type="match status" value="1"/>
</dbReference>
<dbReference type="NCBIfam" id="TIGR03632">
    <property type="entry name" value="uS11_bact"/>
    <property type="match status" value="1"/>
</dbReference>
<dbReference type="PANTHER" id="PTHR11759">
    <property type="entry name" value="40S RIBOSOMAL PROTEIN S14/30S RIBOSOMAL PROTEIN S11"/>
    <property type="match status" value="1"/>
</dbReference>
<dbReference type="Pfam" id="PF00411">
    <property type="entry name" value="Ribosomal_S11"/>
    <property type="match status" value="1"/>
</dbReference>
<dbReference type="PIRSF" id="PIRSF002131">
    <property type="entry name" value="Ribosomal_S11"/>
    <property type="match status" value="1"/>
</dbReference>
<dbReference type="SUPFAM" id="SSF53137">
    <property type="entry name" value="Translational machinery components"/>
    <property type="match status" value="1"/>
</dbReference>
<dbReference type="PROSITE" id="PS00054">
    <property type="entry name" value="RIBOSOMAL_S11"/>
    <property type="match status" value="1"/>
</dbReference>
<evidence type="ECO:0000255" key="1">
    <source>
        <dbReference type="HAMAP-Rule" id="MF_01310"/>
    </source>
</evidence>
<evidence type="ECO:0000305" key="2"/>
<reference key="1">
    <citation type="journal article" date="2010" name="Genome Biol. Evol.">
        <title>Continuing evolution of Burkholderia mallei through genome reduction and large-scale rearrangements.</title>
        <authorList>
            <person name="Losada L."/>
            <person name="Ronning C.M."/>
            <person name="DeShazer D."/>
            <person name="Woods D."/>
            <person name="Fedorova N."/>
            <person name="Kim H.S."/>
            <person name="Shabalina S.A."/>
            <person name="Pearson T.R."/>
            <person name="Brinkac L."/>
            <person name="Tan P."/>
            <person name="Nandi T."/>
            <person name="Crabtree J."/>
            <person name="Badger J."/>
            <person name="Beckstrom-Sternberg S."/>
            <person name="Saqib M."/>
            <person name="Schutzer S.E."/>
            <person name="Keim P."/>
            <person name="Nierman W.C."/>
        </authorList>
    </citation>
    <scope>NUCLEOTIDE SEQUENCE [LARGE SCALE GENOMIC DNA]</scope>
    <source>
        <strain>SAVP1</strain>
    </source>
</reference>
<sequence>MAKASNTAAQRVRKKVKKNVAEGVVHVHASFNNTIITITDRQGNALAWATSGGQGFKGSRKSTPFAAQVAAESAGRVAMEYGVKNLEVRIKGPGPGRESAVRALHGLGIKITAISDVTPIPHNGCRPPKRRRI</sequence>
<feature type="chain" id="PRO_1000051826" description="Small ribosomal subunit protein uS11">
    <location>
        <begin position="1"/>
        <end position="133"/>
    </location>
</feature>
<keyword id="KW-0687">Ribonucleoprotein</keyword>
<keyword id="KW-0689">Ribosomal protein</keyword>
<keyword id="KW-0694">RNA-binding</keyword>
<keyword id="KW-0699">rRNA-binding</keyword>
<accession>A1V879</accession>
<organism>
    <name type="scientific">Burkholderia mallei (strain SAVP1)</name>
    <dbReference type="NCBI Taxonomy" id="320388"/>
    <lineage>
        <taxon>Bacteria</taxon>
        <taxon>Pseudomonadati</taxon>
        <taxon>Pseudomonadota</taxon>
        <taxon>Betaproteobacteria</taxon>
        <taxon>Burkholderiales</taxon>
        <taxon>Burkholderiaceae</taxon>
        <taxon>Burkholderia</taxon>
        <taxon>pseudomallei group</taxon>
    </lineage>
</organism>
<protein>
    <recommendedName>
        <fullName evidence="1">Small ribosomal subunit protein uS11</fullName>
    </recommendedName>
    <alternativeName>
        <fullName evidence="2">30S ribosomal protein S11</fullName>
    </alternativeName>
</protein>
<gene>
    <name evidence="1" type="primary">rpsK</name>
    <name type="ordered locus">BMASAVP1_A3145</name>
</gene>
<proteinExistence type="inferred from homology"/>
<name>RS11_BURMS</name>